<sequence length="194" mass="21929">MRIGEISRKTYETDIEVKIDLDGRGKYNIDTGIGFFNHMLCMIAKHGIMDMDVYAKGDLDVDFHHTVEDVGICIGKSIKKALGNKKSIKRYGTFFIPMDESLSMCSVDLSGRPFLVFQGELKNSKVGEMDTELIEEFFRALAFNAEMTLHIKVFYGKNTHHIIESVFKSFAHALREAVSIDEKIEGTMSTKGMI</sequence>
<evidence type="ECO:0000255" key="1">
    <source>
        <dbReference type="HAMAP-Rule" id="MF_00076"/>
    </source>
</evidence>
<name>HIS7_CLOK1</name>
<reference key="1">
    <citation type="submission" date="2005-09" db="EMBL/GenBank/DDBJ databases">
        <title>Complete genome sequence of Clostridium kluyveri and comparative genomics of Clostridia species.</title>
        <authorList>
            <person name="Inui M."/>
            <person name="Nonaka H."/>
            <person name="Shinoda Y."/>
            <person name="Ikenaga Y."/>
            <person name="Abe M."/>
            <person name="Naito K."/>
            <person name="Vertes A.A."/>
            <person name="Yukawa H."/>
        </authorList>
    </citation>
    <scope>NUCLEOTIDE SEQUENCE [LARGE SCALE GENOMIC DNA]</scope>
    <source>
        <strain>NBRC 12016</strain>
    </source>
</reference>
<keyword id="KW-0028">Amino-acid biosynthesis</keyword>
<keyword id="KW-0963">Cytoplasm</keyword>
<keyword id="KW-0368">Histidine biosynthesis</keyword>
<keyword id="KW-0456">Lyase</keyword>
<proteinExistence type="inferred from homology"/>
<dbReference type="EC" id="4.2.1.19" evidence="1"/>
<dbReference type="EMBL" id="AP009049">
    <property type="protein sequence ID" value="BAH06244.1"/>
    <property type="molecule type" value="Genomic_DNA"/>
</dbReference>
<dbReference type="RefSeq" id="WP_012101684.1">
    <property type="nucleotide sequence ID" value="NC_011837.1"/>
</dbReference>
<dbReference type="SMR" id="B9E169"/>
<dbReference type="KEGG" id="ckr:CKR_1193"/>
<dbReference type="HOGENOM" id="CLU_044308_3_0_9"/>
<dbReference type="UniPathway" id="UPA00031">
    <property type="reaction ID" value="UER00011"/>
</dbReference>
<dbReference type="Proteomes" id="UP000007969">
    <property type="component" value="Chromosome"/>
</dbReference>
<dbReference type="GO" id="GO:0005737">
    <property type="term" value="C:cytoplasm"/>
    <property type="evidence" value="ECO:0007669"/>
    <property type="project" value="UniProtKB-SubCell"/>
</dbReference>
<dbReference type="GO" id="GO:0004424">
    <property type="term" value="F:imidazoleglycerol-phosphate dehydratase activity"/>
    <property type="evidence" value="ECO:0007669"/>
    <property type="project" value="UniProtKB-UniRule"/>
</dbReference>
<dbReference type="GO" id="GO:0000105">
    <property type="term" value="P:L-histidine biosynthetic process"/>
    <property type="evidence" value="ECO:0007669"/>
    <property type="project" value="UniProtKB-UniRule"/>
</dbReference>
<dbReference type="CDD" id="cd07914">
    <property type="entry name" value="IGPD"/>
    <property type="match status" value="1"/>
</dbReference>
<dbReference type="FunFam" id="3.30.230.40:FF:000001">
    <property type="entry name" value="Imidazoleglycerol-phosphate dehydratase HisB"/>
    <property type="match status" value="1"/>
</dbReference>
<dbReference type="FunFam" id="3.30.230.40:FF:000003">
    <property type="entry name" value="Imidazoleglycerol-phosphate dehydratase HisB"/>
    <property type="match status" value="1"/>
</dbReference>
<dbReference type="Gene3D" id="3.30.230.40">
    <property type="entry name" value="Imidazole glycerol phosphate dehydratase, domain 1"/>
    <property type="match status" value="2"/>
</dbReference>
<dbReference type="HAMAP" id="MF_00076">
    <property type="entry name" value="HisB"/>
    <property type="match status" value="1"/>
</dbReference>
<dbReference type="InterPro" id="IPR038494">
    <property type="entry name" value="IGPD_sf"/>
</dbReference>
<dbReference type="InterPro" id="IPR000807">
    <property type="entry name" value="ImidazoleglycerolP_deHydtase"/>
</dbReference>
<dbReference type="InterPro" id="IPR020565">
    <property type="entry name" value="ImidazoleglycerP_deHydtase_CS"/>
</dbReference>
<dbReference type="InterPro" id="IPR020568">
    <property type="entry name" value="Ribosomal_Su5_D2-typ_SF"/>
</dbReference>
<dbReference type="NCBIfam" id="NF002107">
    <property type="entry name" value="PRK00951.1-2"/>
    <property type="match status" value="1"/>
</dbReference>
<dbReference type="NCBIfam" id="NF002109">
    <property type="entry name" value="PRK00951.1-5"/>
    <property type="match status" value="1"/>
</dbReference>
<dbReference type="NCBIfam" id="NF002111">
    <property type="entry name" value="PRK00951.2-1"/>
    <property type="match status" value="1"/>
</dbReference>
<dbReference type="NCBIfam" id="NF002114">
    <property type="entry name" value="PRK00951.2-4"/>
    <property type="match status" value="1"/>
</dbReference>
<dbReference type="PANTHER" id="PTHR23133:SF2">
    <property type="entry name" value="IMIDAZOLEGLYCEROL-PHOSPHATE DEHYDRATASE"/>
    <property type="match status" value="1"/>
</dbReference>
<dbReference type="PANTHER" id="PTHR23133">
    <property type="entry name" value="IMIDAZOLEGLYCEROL-PHOSPHATE DEHYDRATASE HIS7"/>
    <property type="match status" value="1"/>
</dbReference>
<dbReference type="Pfam" id="PF00475">
    <property type="entry name" value="IGPD"/>
    <property type="match status" value="1"/>
</dbReference>
<dbReference type="SUPFAM" id="SSF54211">
    <property type="entry name" value="Ribosomal protein S5 domain 2-like"/>
    <property type="match status" value="2"/>
</dbReference>
<dbReference type="PROSITE" id="PS00954">
    <property type="entry name" value="IGP_DEHYDRATASE_1"/>
    <property type="match status" value="1"/>
</dbReference>
<dbReference type="PROSITE" id="PS00955">
    <property type="entry name" value="IGP_DEHYDRATASE_2"/>
    <property type="match status" value="1"/>
</dbReference>
<protein>
    <recommendedName>
        <fullName evidence="1">Imidazoleglycerol-phosphate dehydratase</fullName>
        <shortName evidence="1">IGPD</shortName>
        <ecNumber evidence="1">4.2.1.19</ecNumber>
    </recommendedName>
</protein>
<organism>
    <name type="scientific">Clostridium kluyveri (strain NBRC 12016)</name>
    <dbReference type="NCBI Taxonomy" id="583346"/>
    <lineage>
        <taxon>Bacteria</taxon>
        <taxon>Bacillati</taxon>
        <taxon>Bacillota</taxon>
        <taxon>Clostridia</taxon>
        <taxon>Eubacteriales</taxon>
        <taxon>Clostridiaceae</taxon>
        <taxon>Clostridium</taxon>
    </lineage>
</organism>
<accession>B9E169</accession>
<feature type="chain" id="PRO_1000190611" description="Imidazoleglycerol-phosphate dehydratase">
    <location>
        <begin position="1"/>
        <end position="194"/>
    </location>
</feature>
<comment type="catalytic activity">
    <reaction evidence="1">
        <text>D-erythro-1-(imidazol-4-yl)glycerol 3-phosphate = 3-(imidazol-4-yl)-2-oxopropyl phosphate + H2O</text>
        <dbReference type="Rhea" id="RHEA:11040"/>
        <dbReference type="ChEBI" id="CHEBI:15377"/>
        <dbReference type="ChEBI" id="CHEBI:57766"/>
        <dbReference type="ChEBI" id="CHEBI:58278"/>
        <dbReference type="EC" id="4.2.1.19"/>
    </reaction>
</comment>
<comment type="pathway">
    <text evidence="1">Amino-acid biosynthesis; L-histidine biosynthesis; L-histidine from 5-phospho-alpha-D-ribose 1-diphosphate: step 6/9.</text>
</comment>
<comment type="subcellular location">
    <subcellularLocation>
        <location evidence="1">Cytoplasm</location>
    </subcellularLocation>
</comment>
<comment type="similarity">
    <text evidence="1">Belongs to the imidazoleglycerol-phosphate dehydratase family.</text>
</comment>
<gene>
    <name evidence="1" type="primary">hisB</name>
    <name type="ordered locus">CKR_1193</name>
</gene>